<name>M49_STRP9</name>
<proteinExistence type="evidence at protein level"/>
<dbReference type="EMBL" id="M23689">
    <property type="protein sequence ID" value="AAA26918.1"/>
    <property type="molecule type" value="Genomic_DNA"/>
</dbReference>
<dbReference type="EMBL" id="M31789">
    <property type="protein sequence ID" value="AAA26868.1"/>
    <property type="molecule type" value="Genomic_DNA"/>
</dbReference>
<dbReference type="EMBL" id="M86806">
    <property type="protein sequence ID" value="AAA26888.1"/>
    <property type="molecule type" value="Genomic_DNA"/>
</dbReference>
<dbReference type="PIR" id="A43715">
    <property type="entry name" value="A43715"/>
</dbReference>
<dbReference type="PDB" id="5HZP">
    <property type="method" value="X-ray"/>
    <property type="resolution" value="2.74 A"/>
    <property type="chains" value="A/C=42-127"/>
</dbReference>
<dbReference type="PDBsum" id="5HZP"/>
<dbReference type="SMR" id="P16947"/>
<dbReference type="PHI-base" id="PHI:6880"/>
<dbReference type="GO" id="GO:0005576">
    <property type="term" value="C:extracellular region"/>
    <property type="evidence" value="ECO:0007669"/>
    <property type="project" value="UniProtKB-KW"/>
</dbReference>
<dbReference type="GO" id="GO:0006909">
    <property type="term" value="P:phagocytosis"/>
    <property type="evidence" value="ECO:0007669"/>
    <property type="project" value="UniProtKB-KW"/>
</dbReference>
<dbReference type="Gene3D" id="6.10.250.460">
    <property type="match status" value="3"/>
</dbReference>
<dbReference type="InterPro" id="IPR019931">
    <property type="entry name" value="LPXTG_anchor"/>
</dbReference>
<dbReference type="InterPro" id="IPR019950">
    <property type="entry name" value="M_anchor"/>
</dbReference>
<dbReference type="InterPro" id="IPR003345">
    <property type="entry name" value="M_repeat"/>
</dbReference>
<dbReference type="InterPro" id="IPR049896">
    <property type="entry name" value="SMCR"/>
</dbReference>
<dbReference type="InterPro" id="IPR049895">
    <property type="entry name" value="SMDRR"/>
</dbReference>
<dbReference type="InterPro" id="IPR005877">
    <property type="entry name" value="YSIRK_signal_dom"/>
</dbReference>
<dbReference type="NCBIfam" id="TIGR01167">
    <property type="entry name" value="LPXTG_anchor"/>
    <property type="match status" value="1"/>
</dbReference>
<dbReference type="NCBIfam" id="TIGR01168">
    <property type="entry name" value="YSIRK_signal"/>
    <property type="match status" value="1"/>
</dbReference>
<dbReference type="Pfam" id="PF00746">
    <property type="entry name" value="Gram_pos_anchor"/>
    <property type="match status" value="1"/>
</dbReference>
<dbReference type="Pfam" id="PF02370">
    <property type="entry name" value="M"/>
    <property type="match status" value="3"/>
</dbReference>
<dbReference type="Pfam" id="PF04650">
    <property type="entry name" value="YSIRK_signal"/>
    <property type="match status" value="1"/>
</dbReference>
<dbReference type="PRINTS" id="PR00015">
    <property type="entry name" value="GPOSANCHOR"/>
</dbReference>
<dbReference type="PROSITE" id="PS50847">
    <property type="entry name" value="GRAM_POS_ANCHORING"/>
    <property type="match status" value="1"/>
</dbReference>
<dbReference type="PROSITE" id="PS52028">
    <property type="entry name" value="SMCR"/>
    <property type="match status" value="3"/>
</dbReference>
<dbReference type="PROSITE" id="PS52030">
    <property type="entry name" value="SMDRR"/>
    <property type="match status" value="1"/>
</dbReference>
<protein>
    <recommendedName>
        <fullName>M protein, serotype 49</fullName>
    </recommendedName>
</protein>
<comment type="function">
    <text>This protein is one of the different antigenic serotypes of protein M. Protein M is closely associated with virulence of the bacterium and can render the organism resistant to phagocytosis.</text>
</comment>
<comment type="subunit">
    <text evidence="6">Homodimer.</text>
</comment>
<comment type="subcellular location">
    <subcellularLocation>
        <location evidence="1">Secreted</location>
        <location evidence="1">Cell wall</location>
        <topology evidence="1">Peptidoglycan-anchor</topology>
    </subcellularLocation>
</comment>
<comment type="similarity">
    <text evidence="6">Belongs to the M protein family.</text>
</comment>
<reference key="1">
    <citation type="journal article" date="1989" name="J. Bacteriol.">
        <title>Identification of a divergent M protein gene and an M protein-related gene family in Streptococcus pyogenes serotype 49.</title>
        <authorList>
            <person name="Haanes E.J."/>
            <person name="Cleary P.P."/>
        </authorList>
    </citation>
    <scope>NUCLEOTIDE SEQUENCE [GENOMIC DNA]</scope>
</reference>
<reference key="2">
    <citation type="journal article" date="1992" name="J. Bacteriol.">
        <title>Architecture of the vir regulons of group streptococci parallels opacity factor phenotype and M protein class.</title>
        <authorList>
            <person name="Haanes E.J."/>
            <person name="Heath D.G."/>
            <person name="Cleary P.P."/>
        </authorList>
    </citation>
    <scope>NUCLEOTIDE SEQUENCE [GENOMIC DNA] OF 1-82</scope>
    <source>
        <strain>CS101 / Serotype M49</strain>
    </source>
</reference>
<reference key="3">
    <citation type="journal article" date="1988" name="J. Biol. Chem.">
        <title>Complete amino acid sequence of streptococcal PepM49 protein, a nephritis-associated serotype. Conserved conformational design among sequentially distinct M protein serotypes.</title>
        <authorList>
            <person name="Khandke K.M."/>
            <person name="Fairwell T."/>
            <person name="Acharya A.S."/>
            <person name="Trus B.L."/>
            <person name="Manjula B.N."/>
        </authorList>
    </citation>
    <scope>PROTEIN SEQUENCE OF 42-188</scope>
    <source>
        <strain>B915 / Serotype M49</strain>
    </source>
</reference>
<reference key="4">
    <citation type="journal article" date="1987" name="J. Exp. Med.">
        <title>Difference in the structural features of streptococcal M proteins from nephritogenic and rheumatogenic serotypes.</title>
        <authorList>
            <person name="Khandke K.M."/>
            <person name="Fairwell T."/>
            <person name="Manjula B.N."/>
        </authorList>
    </citation>
    <scope>PROTEIN SEQUENCE OF 46-105</scope>
    <source>
        <strain>B915 / Serotype M49</strain>
    </source>
</reference>
<gene>
    <name type="primary">emm49</name>
</gene>
<keyword id="KW-0002">3D-structure</keyword>
<keyword id="KW-0134">Cell wall</keyword>
<keyword id="KW-0175">Coiled coil</keyword>
<keyword id="KW-0903">Direct protein sequencing</keyword>
<keyword id="KW-0572">Peptidoglycan-anchor</keyword>
<keyword id="KW-0581">Phagocytosis</keyword>
<keyword id="KW-0677">Repeat</keyword>
<keyword id="KW-0964">Secreted</keyword>
<keyword id="KW-0732">Signal</keyword>
<keyword id="KW-0843">Virulence</keyword>
<feature type="signal peptide" evidence="5">
    <location>
        <begin position="1"/>
        <end position="41"/>
    </location>
</feature>
<feature type="chain" id="PRO_0000005625" description="M protein, serotype 49">
    <location>
        <begin position="42"/>
        <end position="359"/>
    </location>
</feature>
<feature type="propeptide" id="PRO_0000005626" description="Removed by sortase" evidence="1">
    <location>
        <begin position="360"/>
        <end position="389"/>
    </location>
</feature>
<feature type="repeat" description="A-1">
    <location>
        <begin position="89"/>
        <end position="99"/>
    </location>
</feature>
<feature type="repeat" description="A-2">
    <location>
        <begin position="125"/>
        <end position="135"/>
    </location>
</feature>
<feature type="repeat" description="C 1" evidence="2">
    <location>
        <begin position="154"/>
        <end position="188"/>
    </location>
</feature>
<feature type="repeat" description="C 2" evidence="2">
    <location>
        <begin position="196"/>
        <end position="230"/>
    </location>
</feature>
<feature type="repeat" description="C 3" evidence="2">
    <location>
        <begin position="238"/>
        <end position="272"/>
    </location>
</feature>
<feature type="repeat" description="D 1" evidence="3">
    <location>
        <begin position="305"/>
        <end position="310"/>
    </location>
</feature>
<feature type="repeat" description="D 2" evidence="3">
    <location>
        <begin position="311"/>
        <end position="316"/>
    </location>
</feature>
<feature type="repeat" description="D 3" evidence="3">
    <location>
        <begin position="319"/>
        <end position="324"/>
    </location>
</feature>
<feature type="repeat" description="D 4" evidence="3">
    <location>
        <begin position="326"/>
        <end position="331"/>
    </location>
</feature>
<feature type="region of interest" description="2 X repeats, type A">
    <location>
        <begin position="89"/>
        <end position="135"/>
    </location>
</feature>
<feature type="region of interest" description="Disordered" evidence="4">
    <location>
        <begin position="93"/>
        <end position="182"/>
    </location>
</feature>
<feature type="region of interest" description="Disordered" evidence="4">
    <location>
        <begin position="194"/>
        <end position="224"/>
    </location>
</feature>
<feature type="region of interest" description="Disordered" evidence="4">
    <location>
        <begin position="236"/>
        <end position="271"/>
    </location>
</feature>
<feature type="region of interest" description="Disordered" evidence="4">
    <location>
        <begin position="326"/>
        <end position="362"/>
    </location>
</feature>
<feature type="short sequence motif" description="LPXTG sorting signal" evidence="1">
    <location>
        <begin position="356"/>
        <end position="360"/>
    </location>
</feature>
<feature type="compositionally biased region" description="Basic and acidic residues" evidence="4">
    <location>
        <begin position="93"/>
        <end position="147"/>
    </location>
</feature>
<feature type="compositionally biased region" description="Basic and acidic residues" evidence="4">
    <location>
        <begin position="157"/>
        <end position="182"/>
    </location>
</feature>
<feature type="compositionally biased region" description="Basic and acidic residues" evidence="4">
    <location>
        <begin position="194"/>
        <end position="204"/>
    </location>
</feature>
<feature type="compositionally biased region" description="Basic and acidic residues" evidence="4">
    <location>
        <begin position="212"/>
        <end position="224"/>
    </location>
</feature>
<feature type="compositionally biased region" description="Basic and acidic residues" evidence="4">
    <location>
        <begin position="236"/>
        <end position="246"/>
    </location>
</feature>
<feature type="compositionally biased region" description="Basic and acidic residues" evidence="4">
    <location>
        <begin position="254"/>
        <end position="270"/>
    </location>
</feature>
<feature type="compositionally biased region" description="Polar residues" evidence="4">
    <location>
        <begin position="342"/>
        <end position="362"/>
    </location>
</feature>
<feature type="modified residue" description="Pentaglycyl murein peptidoglycan amidated threonine" evidence="1">
    <location>
        <position position="359"/>
    </location>
</feature>
<feature type="sequence conflict" description="In Ref. 3; AA sequence." evidence="6" ref="3">
    <original>A</original>
    <variation>V</variation>
    <location>
        <position position="42"/>
    </location>
</feature>
<feature type="sequence conflict" description="In Ref. 4; AA sequence." evidence="6" ref="4">
    <original>A</original>
    <variation>K</variation>
    <location>
        <position position="48"/>
    </location>
</feature>
<feature type="sequence conflict" description="In Ref. 3; AA sequence." evidence="6" ref="3">
    <location>
        <begin position="49"/>
        <end position="52"/>
    </location>
</feature>
<feature type="sequence conflict" description="In Ref. 4; AA sequence." evidence="6" ref="4">
    <original>V</original>
    <variation>A</variation>
    <location>
        <position position="52"/>
    </location>
</feature>
<feature type="turn" evidence="7">
    <location>
        <begin position="58"/>
        <end position="60"/>
    </location>
</feature>
<feature type="helix" evidence="7">
    <location>
        <begin position="61"/>
        <end position="113"/>
    </location>
</feature>
<feature type="helix" evidence="7">
    <location>
        <begin position="115"/>
        <end position="124"/>
    </location>
</feature>
<evidence type="ECO:0000255" key="1">
    <source>
        <dbReference type="PROSITE-ProRule" id="PRU00477"/>
    </source>
</evidence>
<evidence type="ECO:0000255" key="2">
    <source>
        <dbReference type="PROSITE-ProRule" id="PRU01372"/>
    </source>
</evidence>
<evidence type="ECO:0000255" key="3">
    <source>
        <dbReference type="PROSITE-ProRule" id="PRU01374"/>
    </source>
</evidence>
<evidence type="ECO:0000256" key="4">
    <source>
        <dbReference type="SAM" id="MobiDB-lite"/>
    </source>
</evidence>
<evidence type="ECO:0000269" key="5">
    <source>
    </source>
</evidence>
<evidence type="ECO:0000305" key="6"/>
<evidence type="ECO:0007829" key="7">
    <source>
        <dbReference type="PDB" id="5HZP"/>
    </source>
</evidence>
<sequence length="389" mass="43915">MARKDTNKQYSLRKLKTGTASVAVAVAVLGAGFANQTEVKAAEKKVEAKVEVAENNVSSVARREKELYDQIADLTDKNGEYLERIGELEERQKNLEKLEHQSQVAADKHYQEQAKKHQEYKQEQEERQKNQEQLERKYQREVEKRYQEQLQKQQQLETEKQISEASRKSLSRDLEASREAKKKVEADLAALTAEHQKLKEEKQISDASRQGLSRDLEASREAKKKVEADLAALTAEHQKLKEEKQISDASRQGLSRDLEASREAKKKVEADLAEANSKLQALEKLNKELEEGKKLSEKEKAELQARLEAEAKALKEQLAKQAEELAKLKGNQTPNAKVAPQANRSRSAMTQQKRTLPSTGETANPFFTAAAATVMVSAGMLALKRKEEN</sequence>
<organism>
    <name type="scientific">Streptococcus pyogenes serotype M49</name>
    <dbReference type="NCBI Taxonomy" id="301452"/>
    <lineage>
        <taxon>Bacteria</taxon>
        <taxon>Bacillati</taxon>
        <taxon>Bacillota</taxon>
        <taxon>Bacilli</taxon>
        <taxon>Lactobacillales</taxon>
        <taxon>Streptococcaceae</taxon>
        <taxon>Streptococcus</taxon>
    </lineage>
</organism>
<accession>P16947</accession>
<accession>P97165</accession>